<dbReference type="EC" id="3.1.4.4" evidence="4"/>
<dbReference type="EMBL" id="AY305003">
    <property type="protein sequence ID" value="AAP68834.1"/>
    <property type="molecule type" value="mRNA"/>
</dbReference>
<dbReference type="EMBL" id="AM182458">
    <property type="protein sequence ID" value="CAJ58441.1"/>
    <property type="molecule type" value="mRNA"/>
</dbReference>
<dbReference type="EMBL" id="AC011620">
    <property type="protein sequence ID" value="AAF26134.1"/>
    <property type="status" value="ALT_SEQ"/>
    <property type="molecule type" value="Genomic_DNA"/>
</dbReference>
<dbReference type="EMBL" id="CP002686">
    <property type="protein sequence ID" value="AEE74269.1"/>
    <property type="molecule type" value="Genomic_DNA"/>
</dbReference>
<dbReference type="RefSeq" id="NP_187214.2">
    <property type="nucleotide sequence ID" value="NM_111436.6"/>
</dbReference>
<dbReference type="SMR" id="Q9M9W8"/>
<dbReference type="FunCoup" id="Q9M9W8">
    <property type="interactions" value="1631"/>
</dbReference>
<dbReference type="STRING" id="3702.Q9M9W8"/>
<dbReference type="PaxDb" id="3702-AT3G05630.1"/>
<dbReference type="ProteomicsDB" id="235039"/>
<dbReference type="EnsemblPlants" id="AT3G05630.1">
    <property type="protein sequence ID" value="AT3G05630.1"/>
    <property type="gene ID" value="AT3G05630"/>
</dbReference>
<dbReference type="GeneID" id="819730"/>
<dbReference type="Gramene" id="AT3G05630.1">
    <property type="protein sequence ID" value="AT3G05630.1"/>
    <property type="gene ID" value="AT3G05630"/>
</dbReference>
<dbReference type="KEGG" id="ath:AT3G05630"/>
<dbReference type="Araport" id="AT3G05630"/>
<dbReference type="TAIR" id="AT3G05630">
    <property type="gene designation" value="PLDP2"/>
</dbReference>
<dbReference type="eggNOG" id="KOG1329">
    <property type="taxonomic scope" value="Eukaryota"/>
</dbReference>
<dbReference type="HOGENOM" id="CLU_000690_2_0_1"/>
<dbReference type="InParanoid" id="Q9M9W8"/>
<dbReference type="OMA" id="VRHPHRE"/>
<dbReference type="PhylomeDB" id="Q9M9W8"/>
<dbReference type="BioCyc" id="ARA:AT3G05630-MONOMER"/>
<dbReference type="BRENDA" id="3.1.4.4">
    <property type="organism ID" value="399"/>
</dbReference>
<dbReference type="PRO" id="PR:Q9M9W8"/>
<dbReference type="Proteomes" id="UP000006548">
    <property type="component" value="Chromosome 3"/>
</dbReference>
<dbReference type="ExpressionAtlas" id="Q9M9W8">
    <property type="expression patterns" value="baseline and differential"/>
</dbReference>
<dbReference type="GO" id="GO:0016020">
    <property type="term" value="C:membrane"/>
    <property type="evidence" value="ECO:0007669"/>
    <property type="project" value="GOC"/>
</dbReference>
<dbReference type="GO" id="GO:0005773">
    <property type="term" value="C:vacuole"/>
    <property type="evidence" value="ECO:0007005"/>
    <property type="project" value="TAIR"/>
</dbReference>
<dbReference type="GO" id="GO:0004630">
    <property type="term" value="F:phospholipase D activity"/>
    <property type="evidence" value="ECO:0000314"/>
    <property type="project" value="TAIR"/>
</dbReference>
<dbReference type="GO" id="GO:0006995">
    <property type="term" value="P:cellular response to nitrogen starvation"/>
    <property type="evidence" value="ECO:0000270"/>
    <property type="project" value="TAIR"/>
</dbReference>
<dbReference type="GO" id="GO:0016036">
    <property type="term" value="P:cellular response to phosphate starvation"/>
    <property type="evidence" value="ECO:0000270"/>
    <property type="project" value="TAIR"/>
</dbReference>
<dbReference type="GO" id="GO:0019375">
    <property type="term" value="P:galactolipid biosynthetic process"/>
    <property type="evidence" value="ECO:0000315"/>
    <property type="project" value="TAIR"/>
</dbReference>
<dbReference type="GO" id="GO:0035556">
    <property type="term" value="P:intracellular signal transduction"/>
    <property type="evidence" value="ECO:0007669"/>
    <property type="project" value="InterPro"/>
</dbReference>
<dbReference type="GO" id="GO:0008610">
    <property type="term" value="P:lipid biosynthetic process"/>
    <property type="evidence" value="ECO:0000314"/>
    <property type="project" value="TAIR"/>
</dbReference>
<dbReference type="GO" id="GO:0006654">
    <property type="term" value="P:phosphatidic acid biosynthetic process"/>
    <property type="evidence" value="ECO:0007669"/>
    <property type="project" value="InterPro"/>
</dbReference>
<dbReference type="GO" id="GO:0009395">
    <property type="term" value="P:phospholipid catabolic process"/>
    <property type="evidence" value="ECO:0000315"/>
    <property type="project" value="TAIR"/>
</dbReference>
<dbReference type="GO" id="GO:0060627">
    <property type="term" value="P:regulation of vesicle-mediated transport"/>
    <property type="evidence" value="ECO:0000314"/>
    <property type="project" value="TAIR"/>
</dbReference>
<dbReference type="GO" id="GO:0009733">
    <property type="term" value="P:response to auxin"/>
    <property type="evidence" value="ECO:0000315"/>
    <property type="project" value="TAIR"/>
</dbReference>
<dbReference type="GO" id="GO:0048364">
    <property type="term" value="P:root development"/>
    <property type="evidence" value="ECO:0000316"/>
    <property type="project" value="TAIR"/>
</dbReference>
<dbReference type="CDD" id="cd01254">
    <property type="entry name" value="PH_PLD"/>
    <property type="match status" value="1"/>
</dbReference>
<dbReference type="CDD" id="cd09138">
    <property type="entry name" value="PLDc_vPLD1_2_yPLD_like_1"/>
    <property type="match status" value="1"/>
</dbReference>
<dbReference type="CDD" id="cd09141">
    <property type="entry name" value="PLDc_vPLD1_2_yPLD_like_2"/>
    <property type="match status" value="1"/>
</dbReference>
<dbReference type="CDD" id="cd06895">
    <property type="entry name" value="PX_PLD"/>
    <property type="match status" value="1"/>
</dbReference>
<dbReference type="FunFam" id="2.30.29.30:FF:000497">
    <property type="entry name" value="Phospholipase"/>
    <property type="match status" value="1"/>
</dbReference>
<dbReference type="FunFam" id="3.30.870.10:FF:000011">
    <property type="entry name" value="Phospholipase"/>
    <property type="match status" value="1"/>
</dbReference>
<dbReference type="Gene3D" id="3.30.870.10">
    <property type="entry name" value="Endonuclease Chain A"/>
    <property type="match status" value="2"/>
</dbReference>
<dbReference type="Gene3D" id="2.30.29.30">
    <property type="entry name" value="Pleckstrin-homology domain (PH domain)/Phosphotyrosine-binding domain (PTB)"/>
    <property type="match status" value="1"/>
</dbReference>
<dbReference type="InterPro" id="IPR011993">
    <property type="entry name" value="PH-like_dom_sf"/>
</dbReference>
<dbReference type="InterPro" id="IPR001849">
    <property type="entry name" value="PH_domain"/>
</dbReference>
<dbReference type="InterPro" id="IPR025202">
    <property type="entry name" value="PLD-like_dom"/>
</dbReference>
<dbReference type="InterPro" id="IPR001736">
    <property type="entry name" value="PLipase_D/transphosphatidylase"/>
</dbReference>
<dbReference type="InterPro" id="IPR016555">
    <property type="entry name" value="PLipase_D_euk"/>
</dbReference>
<dbReference type="InterPro" id="IPR015679">
    <property type="entry name" value="PLipase_D_fam"/>
</dbReference>
<dbReference type="PANTHER" id="PTHR18896">
    <property type="entry name" value="PHOSPHOLIPASE D"/>
    <property type="match status" value="1"/>
</dbReference>
<dbReference type="PANTHER" id="PTHR18896:SF133">
    <property type="entry name" value="PHOSPHOLIPASE D ZETA 2"/>
    <property type="match status" value="1"/>
</dbReference>
<dbReference type="Pfam" id="PF00614">
    <property type="entry name" value="PLDc"/>
    <property type="match status" value="1"/>
</dbReference>
<dbReference type="Pfam" id="PF13091">
    <property type="entry name" value="PLDc_2"/>
    <property type="match status" value="1"/>
</dbReference>
<dbReference type="PIRSF" id="PIRSF009376">
    <property type="entry name" value="Phospholipase_D_euk"/>
    <property type="match status" value="1"/>
</dbReference>
<dbReference type="SMART" id="SM00233">
    <property type="entry name" value="PH"/>
    <property type="match status" value="1"/>
</dbReference>
<dbReference type="SMART" id="SM00155">
    <property type="entry name" value="PLDc"/>
    <property type="match status" value="2"/>
</dbReference>
<dbReference type="SUPFAM" id="SSF50729">
    <property type="entry name" value="PH domain-like"/>
    <property type="match status" value="1"/>
</dbReference>
<dbReference type="SUPFAM" id="SSF56024">
    <property type="entry name" value="Phospholipase D/nuclease"/>
    <property type="match status" value="2"/>
</dbReference>
<dbReference type="PROSITE" id="PS50003">
    <property type="entry name" value="PH_DOMAIN"/>
    <property type="match status" value="1"/>
</dbReference>
<dbReference type="PROSITE" id="PS50035">
    <property type="entry name" value="PLD"/>
    <property type="match status" value="2"/>
</dbReference>
<gene>
    <name evidence="9" type="primary">PLPZETA2</name>
    <name type="synonym">PLDP2</name>
    <name evidence="11" type="ordered locus">At3g05630</name>
    <name evidence="12" type="ORF">F18C1.10</name>
</gene>
<protein>
    <recommendedName>
        <fullName evidence="9">Phospholipase D zeta 2</fullName>
        <shortName evidence="9">PLDzeta2</shortName>
        <ecNumber evidence="4">3.1.4.4</ecNumber>
    </recommendedName>
    <alternativeName>
        <fullName>Phospholipase D p2</fullName>
        <shortName>AtPLDp2</shortName>
    </alternativeName>
    <alternativeName>
        <fullName>Phospholipase D2 PHOX and PX-containing domain protein</fullName>
    </alternativeName>
</protein>
<keyword id="KW-0378">Hydrolase</keyword>
<keyword id="KW-0442">Lipid degradation</keyword>
<keyword id="KW-0443">Lipid metabolism</keyword>
<keyword id="KW-1185">Reference proteome</keyword>
<keyword id="KW-0677">Repeat</keyword>
<name>PLDZ2_ARATH</name>
<evidence type="ECO:0000255" key="1">
    <source>
        <dbReference type="PROSITE-ProRule" id="PRU00145"/>
    </source>
</evidence>
<evidence type="ECO:0000255" key="2">
    <source>
        <dbReference type="PROSITE-ProRule" id="PRU00153"/>
    </source>
</evidence>
<evidence type="ECO:0000256" key="3">
    <source>
        <dbReference type="SAM" id="MobiDB-lite"/>
    </source>
</evidence>
<evidence type="ECO:0000269" key="4">
    <source>
    </source>
</evidence>
<evidence type="ECO:0000269" key="5">
    <source>
    </source>
</evidence>
<evidence type="ECO:0000269" key="6">
    <source>
    </source>
</evidence>
<evidence type="ECO:0000269" key="7">
    <source>
    </source>
</evidence>
<evidence type="ECO:0000269" key="8">
    <source>
    </source>
</evidence>
<evidence type="ECO:0000303" key="9">
    <source>
    </source>
</evidence>
<evidence type="ECO:0000305" key="10"/>
<evidence type="ECO:0000312" key="11">
    <source>
        <dbReference type="Araport" id="AT3G05630"/>
    </source>
</evidence>
<evidence type="ECO:0000312" key="12">
    <source>
        <dbReference type="EMBL" id="AAF26134.1"/>
    </source>
</evidence>
<sequence length="1046" mass="118810">MSTDKLLLPNGVKSDGVIRMTRADAAAAAASSSLGGGSQIFDELPKAAIVSVSRPDTTDFSPLLLSYTLELQYKQFKWTLQKKASQVLYLHFALKKRLIIEELHDKQEQVREWLHSLGIFDMQGSVVQDDEEPDDGALPLHYTEDSIKNRNVPSRAALPIIRPTIGRSETVVDRGRTAMQGYLSLFLGNLDIVNSKEVCKFLEVSRLSFAREYGSKMKEGYVTVKHLRDVPGSDGVRCCLPTHCLGFFGTSWTKVWAVLKPGFLALLEDPFSGKLLDIMVFDTLGLQGTKESSEQPRLAEQVKEHNPLRFGFKVTSGDRTVRLRTTSSRKVKEWVKAVDEAGCYSPHRFGSFAPPRGLTSDGSQAQWFVDGHTAFEAIAFAIQNATSEIFMTGWWLCPELYLKRPFEDHPSLRLDALLETKAKQGVKIYILLYKEVQIALKINSLYSKKRLQNIHKNVKVLRYPDHLSSGIYLWSHHEKIVIVDYQVCFIGGLDLCFGRYDTAEHKIGDCPPYIWPGKDYYNPRESEPNSWEETMKDELDRRKYPRMPWHDVHCALWGPPCRDVARHFVQRWNHSKRNKAPNEQTIPLLMPHHHMVLPHYLGTREIDIIAAAKPEEDPDKPVVLARHDSFSSASPPQEIPLLLPQETDADFAGRGDLKLDSGARQDPGETSEESDLDEAVNDWWWQIGKQSDCRCQIIRSVSQWSAGTSQPEDSIHRAYCSLIQNAEHFIYIENQFFISGLEKEDTILNRVLEALYRRILKAHEENKCFRVVIVIPLLPGFQGGIDDFGAATVRALMHWQYRTISREGTSILDNLNALLGPKTQDYISFYGLRSYGRLFEDGPIATSQIYVHSKLMIVDDRIAVIGSSNINDRSLLGSRDSEIGVVIEDKEFVESSMNGMKWMAGKFSYSLRCSLWSEHLGLHAGEIQKIEDPIKDATYKDLWMATAKKNTDIYNQVFSCIPNEHIRSRAALRHNMALCKDKLGHTTIDLGIAPERLESCGSDSWEILKETRGNLVCFPLQFMCDQEDLRPGFNESEFYTAPQVFH</sequence>
<proteinExistence type="evidence at protein level"/>
<accession>Q9M9W8</accession>
<accession>A3KH17</accession>
<accession>Q7XZQ3</accession>
<organism>
    <name type="scientific">Arabidopsis thaliana</name>
    <name type="common">Mouse-ear cress</name>
    <dbReference type="NCBI Taxonomy" id="3702"/>
    <lineage>
        <taxon>Eukaryota</taxon>
        <taxon>Viridiplantae</taxon>
        <taxon>Streptophyta</taxon>
        <taxon>Embryophyta</taxon>
        <taxon>Tracheophyta</taxon>
        <taxon>Spermatophyta</taxon>
        <taxon>Magnoliopsida</taxon>
        <taxon>eudicotyledons</taxon>
        <taxon>Gunneridae</taxon>
        <taxon>Pentapetalae</taxon>
        <taxon>rosids</taxon>
        <taxon>malvids</taxon>
        <taxon>Brassicales</taxon>
        <taxon>Brassicaceae</taxon>
        <taxon>Camelineae</taxon>
        <taxon>Arabidopsis</taxon>
    </lineage>
</organism>
<comment type="function">
    <text evidence="4 5 6 7 8">Hydrolyzes glycerol-phospholipids at the terminal phosphodiesteric bond to generate phosphatidic acids (PA). Phosphatidylcholine-selective (PubMed:11891260). Regulates vesicle trafficking and auxin responses (PubMed:17259265). Required for the normal cycling of PIN-2 containing vesicles (PubMed:17259265). Contributes to the supply of inorganic phosphorus for cell metabolism and diacylglycerol moieties for galactolipid synthesis in phosphorus-starved roots (PubMed:16617110, PubMed:16891548). Involved in root elongation during phosphate limitation (PubMed:16384909).</text>
</comment>
<comment type="catalytic activity">
    <reaction evidence="4">
        <text>a 1,2-diacyl-sn-glycero-3-phosphocholine + H2O = a 1,2-diacyl-sn-glycero-3-phosphate + choline + H(+)</text>
        <dbReference type="Rhea" id="RHEA:14445"/>
        <dbReference type="ChEBI" id="CHEBI:15354"/>
        <dbReference type="ChEBI" id="CHEBI:15377"/>
        <dbReference type="ChEBI" id="CHEBI:15378"/>
        <dbReference type="ChEBI" id="CHEBI:57643"/>
        <dbReference type="ChEBI" id="CHEBI:58608"/>
        <dbReference type="EC" id="3.1.4.4"/>
    </reaction>
</comment>
<comment type="cofactor">
    <text evidence="4">Does not require Ca(2+) or any other cation for activity.</text>
</comment>
<comment type="tissue specificity">
    <text evidence="5 6 8">Expressed in seedlings, roots, leaves, stems and flowers (PubMed:16384909, PubMed:17259265). Highest expression in roots (PubMed:16384909). Detected only in the meristematic regions up to 4 days after germination and then at later stages in all tissues (PubMed:16617110).</text>
</comment>
<comment type="induction">
    <text evidence="5 6 8">Up-regulated by auxin (PubMed:17259265). Up-regulated by phosphate limitation (PubMed:16384909, PubMed:16617110).</text>
</comment>
<comment type="disruption phenotype">
    <text evidence="5 6 7 8">No visible phenotype when grown under normal conditions (PubMed:16384909). Shorter roots less sensitive to exogenous auxin (PubMed:17259265). Reduced gravitropism (PubMed:17259265). No effect on root hair patterning or root hair growth (PubMed:16384909). Defective in the hydrolysis of phospholipids, reduced capacity to accumulate galactolipids and premature change in root architecture in response to phosphate starvation (PubMed:16617110). Decreased accumulation of phosphatidic acid in roots under phosphate-limited conditions (PubMed:16384909). No effect on the concentration of phospholipids and galactolipids in phosphorus-starved roots (PubMed:16891548). Pldzeta1 and pldzeta2 double mutants show a smaller decrease in phosphatidylcholine and a smaller increase in digalactosyldiacylglycerol in phosphorus-starved roots (PubMed:16891548). Pldzeta1 and pldzeta2 double mutants show reduced primary root elongation and increased lateral root elongation under low-phosphate conditions (PubMed:16384909).</text>
</comment>
<comment type="similarity">
    <text evidence="10">Belongs to the phospholipase D family. PXPH-PLD subfamily.</text>
</comment>
<comment type="sequence caution" evidence="10">
    <conflict type="erroneous gene model prediction">
        <sequence resource="EMBL-CDS" id="AAF26134"/>
    </conflict>
</comment>
<reference key="1">
    <citation type="journal article" date="2002" name="Plant Physiol.">
        <title>The Arabidopsis phospholipase D family. Characterization of a calcium-independent and phosphatidylcholine-selective PLD zeta 1 with distinct regulatory domains.</title>
        <authorList>
            <person name="Qin C."/>
            <person name="Wang X."/>
        </authorList>
    </citation>
    <scope>NUCLEOTIDE SEQUENCE [MRNA]</scope>
    <scope>FUNCTION</scope>
    <scope>CATALYTIC ACTIVITY</scope>
    <scope>COFACTOR</scope>
    <scope>GENE FAMILY</scope>
    <scope>NOMENCLATURE</scope>
</reference>
<reference key="2">
    <citation type="journal article" date="2007" name="Plant Cell">
        <title>Arabidopsis PLDzeta2 regulates vesicle trafficking and is required for auxin response.</title>
        <authorList>
            <person name="Li G."/>
            <person name="Xue H.-W."/>
        </authorList>
    </citation>
    <scope>NUCLEOTIDE SEQUENCE [MRNA]</scope>
    <scope>FUNCTION</scope>
    <scope>TISSUE SPECIFICITY</scope>
    <scope>INDUCTION BY AUXIN</scope>
    <scope>DISRUPTION PHENOTYPE</scope>
</reference>
<reference key="3">
    <citation type="journal article" date="2000" name="Nature">
        <title>Sequence and analysis of chromosome 3 of the plant Arabidopsis thaliana.</title>
        <authorList>
            <person name="Salanoubat M."/>
            <person name="Lemcke K."/>
            <person name="Rieger M."/>
            <person name="Ansorge W."/>
            <person name="Unseld M."/>
            <person name="Fartmann B."/>
            <person name="Valle G."/>
            <person name="Bloecker H."/>
            <person name="Perez-Alonso M."/>
            <person name="Obermaier B."/>
            <person name="Delseny M."/>
            <person name="Boutry M."/>
            <person name="Grivell L.A."/>
            <person name="Mache R."/>
            <person name="Puigdomenech P."/>
            <person name="De Simone V."/>
            <person name="Choisne N."/>
            <person name="Artiguenave F."/>
            <person name="Robert C."/>
            <person name="Brottier P."/>
            <person name="Wincker P."/>
            <person name="Cattolico L."/>
            <person name="Weissenbach J."/>
            <person name="Saurin W."/>
            <person name="Quetier F."/>
            <person name="Schaefer M."/>
            <person name="Mueller-Auer S."/>
            <person name="Gabel C."/>
            <person name="Fuchs M."/>
            <person name="Benes V."/>
            <person name="Wurmbach E."/>
            <person name="Drzonek H."/>
            <person name="Erfle H."/>
            <person name="Jordan N."/>
            <person name="Bangert S."/>
            <person name="Wiedelmann R."/>
            <person name="Kranz H."/>
            <person name="Voss H."/>
            <person name="Holland R."/>
            <person name="Brandt P."/>
            <person name="Nyakatura G."/>
            <person name="Vezzi A."/>
            <person name="D'Angelo M."/>
            <person name="Pallavicini A."/>
            <person name="Toppo S."/>
            <person name="Simionati B."/>
            <person name="Conrad A."/>
            <person name="Hornischer K."/>
            <person name="Kauer G."/>
            <person name="Loehnert T.-H."/>
            <person name="Nordsiek G."/>
            <person name="Reichelt J."/>
            <person name="Scharfe M."/>
            <person name="Schoen O."/>
            <person name="Bargues M."/>
            <person name="Terol J."/>
            <person name="Climent J."/>
            <person name="Navarro P."/>
            <person name="Collado C."/>
            <person name="Perez-Perez A."/>
            <person name="Ottenwaelder B."/>
            <person name="Duchemin D."/>
            <person name="Cooke R."/>
            <person name="Laudie M."/>
            <person name="Berger-Llauro C."/>
            <person name="Purnelle B."/>
            <person name="Masuy D."/>
            <person name="de Haan M."/>
            <person name="Maarse A.C."/>
            <person name="Alcaraz J.-P."/>
            <person name="Cottet A."/>
            <person name="Casacuberta E."/>
            <person name="Monfort A."/>
            <person name="Argiriou A."/>
            <person name="Flores M."/>
            <person name="Liguori R."/>
            <person name="Vitale D."/>
            <person name="Mannhaupt G."/>
            <person name="Haase D."/>
            <person name="Schoof H."/>
            <person name="Rudd S."/>
            <person name="Zaccaria P."/>
            <person name="Mewes H.-W."/>
            <person name="Mayer K.F.X."/>
            <person name="Kaul S."/>
            <person name="Town C.D."/>
            <person name="Koo H.L."/>
            <person name="Tallon L.J."/>
            <person name="Jenkins J."/>
            <person name="Rooney T."/>
            <person name="Rizzo M."/>
            <person name="Walts A."/>
            <person name="Utterback T."/>
            <person name="Fujii C.Y."/>
            <person name="Shea T.P."/>
            <person name="Creasy T.H."/>
            <person name="Haas B."/>
            <person name="Maiti R."/>
            <person name="Wu D."/>
            <person name="Peterson J."/>
            <person name="Van Aken S."/>
            <person name="Pai G."/>
            <person name="Militscher J."/>
            <person name="Sellers P."/>
            <person name="Gill J.E."/>
            <person name="Feldblyum T.V."/>
            <person name="Preuss D."/>
            <person name="Lin X."/>
            <person name="Nierman W.C."/>
            <person name="Salzberg S.L."/>
            <person name="White O."/>
            <person name="Venter J.C."/>
            <person name="Fraser C.M."/>
            <person name="Kaneko T."/>
            <person name="Nakamura Y."/>
            <person name="Sato S."/>
            <person name="Kato T."/>
            <person name="Asamizu E."/>
            <person name="Sasamoto S."/>
            <person name="Kimura T."/>
            <person name="Idesawa K."/>
            <person name="Kawashima K."/>
            <person name="Kishida Y."/>
            <person name="Kiyokawa C."/>
            <person name="Kohara M."/>
            <person name="Matsumoto M."/>
            <person name="Matsuno A."/>
            <person name="Muraki A."/>
            <person name="Nakayama S."/>
            <person name="Nakazaki N."/>
            <person name="Shinpo S."/>
            <person name="Takeuchi C."/>
            <person name="Wada T."/>
            <person name="Watanabe A."/>
            <person name="Yamada M."/>
            <person name="Yasuda M."/>
            <person name="Tabata S."/>
        </authorList>
    </citation>
    <scope>NUCLEOTIDE SEQUENCE [LARGE SCALE GENOMIC DNA]</scope>
    <source>
        <strain>cv. Columbia</strain>
    </source>
</reference>
<reference key="4">
    <citation type="journal article" date="2017" name="Plant J.">
        <title>Araport11: a complete reannotation of the Arabidopsis thaliana reference genome.</title>
        <authorList>
            <person name="Cheng C.Y."/>
            <person name="Krishnakumar V."/>
            <person name="Chan A.P."/>
            <person name="Thibaud-Nissen F."/>
            <person name="Schobel S."/>
            <person name="Town C.D."/>
        </authorList>
    </citation>
    <scope>GENOME REANNOTATION</scope>
    <source>
        <strain>cv. Columbia</strain>
    </source>
</reference>
<reference key="5">
    <citation type="journal article" date="2006" name="Plant Physiol.">
        <title>Quantitative profiling of Arabidopsis polar glycerolipids in response to phosphorus starvation. Roles of phospholipases D zeta1 and D zeta2 in phosphatidylcholine hydrolysis and digalactosyldiacylglycerol accumulation in phosphorus-starved plants.</title>
        <authorList>
            <person name="Li M."/>
            <person name="Welti R."/>
            <person name="Wang X."/>
        </authorList>
    </citation>
    <scope>FUNCTION</scope>
    <scope>DISRUPTION PHENOTYPE</scope>
</reference>
<reference key="6">
    <citation type="journal article" date="2006" name="Plant Physiol.">
        <title>Double knockouts of phospholipases Dzeta1 and Dzeta2 in Arabidopsis affect root elongation during phosphate-limited growth but do not affect root hair patterning.</title>
        <authorList>
            <person name="Li M."/>
            <person name="Qin C."/>
            <person name="Welti R."/>
            <person name="Wang X."/>
        </authorList>
    </citation>
    <scope>FUNCTION</scope>
    <scope>TISSUE SPECIFICITY</scope>
    <scope>DISRUPTION PHENOTYPE</scope>
    <scope>INDUCTION BY LOW PHOSPHATE</scope>
</reference>
<reference key="7">
    <citation type="journal article" date="2006" name="Proc. Natl. Acad. Sci. U.S.A.">
        <title>Phospholipase DZ2 plays an important role in extraplastidic galactolipid biosynthesis and phosphate recycling in Arabidopsis roots.</title>
        <authorList>
            <person name="Cruz-Ramirez A."/>
            <person name="Oropeza-Aburto A."/>
            <person name="Razo-Hernandez F."/>
            <person name="Ramirez-Chavez E."/>
            <person name="Herrera-Estrella L."/>
        </authorList>
    </citation>
    <scope>FUNCTION</scope>
    <scope>TISSUE SPECIFICITY</scope>
    <scope>INDUCTION BY LOW PHOSPHATE</scope>
    <scope>DISRUPTION PHENOTYPE</scope>
</reference>
<feature type="chain" id="PRO_0000218819" description="Phospholipase D zeta 2">
    <location>
        <begin position="1"/>
        <end position="1046"/>
    </location>
</feature>
<feature type="domain" description="PX">
    <location>
        <begin position="45"/>
        <end position="205"/>
    </location>
</feature>
<feature type="domain" description="PH" evidence="1">
    <location>
        <begin position="215"/>
        <end position="343"/>
    </location>
</feature>
<feature type="domain" description="PLD phosphodiesterase 1" evidence="2">
    <location>
        <begin position="472"/>
        <end position="499"/>
    </location>
</feature>
<feature type="domain" description="PLD phosphodiesterase 2" evidence="2">
    <location>
        <begin position="847"/>
        <end position="874"/>
    </location>
</feature>
<feature type="region of interest" description="Disordered" evidence="3">
    <location>
        <begin position="653"/>
        <end position="677"/>
    </location>
</feature>
<feature type="compositionally biased region" description="Basic and acidic residues" evidence="3">
    <location>
        <begin position="653"/>
        <end position="667"/>
    </location>
</feature>
<feature type="active site" evidence="2">
    <location>
        <position position="477"/>
    </location>
</feature>
<feature type="active site" evidence="2">
    <location>
        <position position="479"/>
    </location>
</feature>
<feature type="active site" evidence="2">
    <location>
        <position position="484"/>
    </location>
</feature>
<feature type="active site" evidence="2">
    <location>
        <position position="852"/>
    </location>
</feature>
<feature type="active site" evidence="2">
    <location>
        <position position="854"/>
    </location>
</feature>
<feature type="active site" evidence="2">
    <location>
        <position position="859"/>
    </location>
</feature>